<evidence type="ECO:0000255" key="1">
    <source>
        <dbReference type="PROSITE-ProRule" id="PRU00175"/>
    </source>
</evidence>
<evidence type="ECO:0000255" key="2">
    <source>
        <dbReference type="PROSITE-ProRule" id="PRU00601"/>
    </source>
</evidence>
<evidence type="ECO:0000255" key="3">
    <source>
        <dbReference type="PROSITE-ProRule" id="PRU00965"/>
    </source>
</evidence>
<evidence type="ECO:0000269" key="4">
    <source>
    </source>
</evidence>
<evidence type="ECO:0000303" key="5">
    <source>
    </source>
</evidence>
<evidence type="ECO:0000305" key="6"/>
<evidence type="ECO:0000312" key="7">
    <source>
        <dbReference type="EMBL" id="ABF95919.1"/>
    </source>
</evidence>
<evidence type="ECO:0000312" key="8">
    <source>
        <dbReference type="EMBL" id="BAF12019.1"/>
    </source>
</evidence>
<evidence type="ECO:0000312" key="9">
    <source>
        <dbReference type="EMBL" id="EEE59054.1"/>
    </source>
</evidence>
<protein>
    <recommendedName>
        <fullName evidence="5">E3 ubiquitin-protein ligase SRFP1</fullName>
        <shortName evidence="5">OsSRFP1</shortName>
        <ecNumber evidence="4">2.3.2.27</ecNumber>
    </recommendedName>
</protein>
<gene>
    <name evidence="5" type="primary">SRFP1</name>
    <name evidence="8" type="ordered locus">Os03g0348900</name>
    <name evidence="7" type="ordered locus">LOC_Os03g22680</name>
    <name evidence="9" type="ORF">OsJ_10832</name>
</gene>
<name>SRFP1_ORYSJ</name>
<organism>
    <name type="scientific">Oryza sativa subsp. japonica</name>
    <name type="common">Rice</name>
    <dbReference type="NCBI Taxonomy" id="39947"/>
    <lineage>
        <taxon>Eukaryota</taxon>
        <taxon>Viridiplantae</taxon>
        <taxon>Streptophyta</taxon>
        <taxon>Embryophyta</taxon>
        <taxon>Tracheophyta</taxon>
        <taxon>Spermatophyta</taxon>
        <taxon>Magnoliopsida</taxon>
        <taxon>Liliopsida</taxon>
        <taxon>Poales</taxon>
        <taxon>Poaceae</taxon>
        <taxon>BOP clade</taxon>
        <taxon>Oryzoideae</taxon>
        <taxon>Oryzeae</taxon>
        <taxon>Oryzinae</taxon>
        <taxon>Oryza</taxon>
        <taxon>Oryza sativa</taxon>
    </lineage>
</organism>
<accession>Q10LI1</accession>
<comment type="function">
    <text evidence="4">Possesses E3 ubiquitin-protein ligase activity in vitro. Possesses transactivation activity in yeast cells. May modulate abiotic stress responses by negatively regulating antioxidant enzymes-mediated reactive oxygen species (ROS) removal.</text>
</comment>
<comment type="catalytic activity">
    <reaction evidence="4">
        <text>S-ubiquitinyl-[E2 ubiquitin-conjugating enzyme]-L-cysteine + [acceptor protein]-L-lysine = [E2 ubiquitin-conjugating enzyme]-L-cysteine + N(6)-ubiquitinyl-[acceptor protein]-L-lysine.</text>
        <dbReference type="EC" id="2.3.2.27"/>
    </reaction>
</comment>
<comment type="pathway">
    <text evidence="6">Protein modification; protein ubiquitination.</text>
</comment>
<comment type="subcellular location">
    <subcellularLocation>
        <location evidence="4">Nucleus</location>
    </subcellularLocation>
    <subcellularLocation>
        <location evidence="4">Cytoplasm</location>
    </subcellularLocation>
    <text evidence="4">Localizes predominantly in nucleus.</text>
</comment>
<comment type="tissue specificity">
    <text>Expressed in roots, leaves, nodes and panicles.</text>
</comment>
<comment type="induction">
    <text evidence="4">Induced by cold, dehydration, salt, hydrogen peroxide and abscisic acid (ABA).</text>
</comment>
<comment type="miscellaneous">
    <text evidence="4">Plants silencing SRFP1 exhibit increased tolerance to salt, cold and oxidative stresses. Plants over-expressing SRFP1 show decreased tolerance to salt, cold and oxidative stresses.</text>
</comment>
<feature type="chain" id="PRO_0000440632" description="E3 ubiquitin-protein ligase SRFP1">
    <location>
        <begin position="1"/>
        <end position="260"/>
    </location>
</feature>
<feature type="zinc finger region" description="CHY-type" evidence="2">
    <location>
        <begin position="11"/>
        <end position="80"/>
    </location>
</feature>
<feature type="zinc finger region" description="CTCHY-type" evidence="3">
    <location>
        <begin position="82"/>
        <end position="146"/>
    </location>
</feature>
<feature type="zinc finger region" description="RING-type; atypical" evidence="1">
    <location>
        <begin position="147"/>
        <end position="190"/>
    </location>
</feature>
<feature type="binding site" evidence="2">
    <location>
        <position position="18"/>
    </location>
    <ligand>
        <name>Zn(2+)</name>
        <dbReference type="ChEBI" id="CHEBI:29105"/>
        <label>1</label>
    </ligand>
</feature>
<feature type="binding site" evidence="2">
    <location>
        <position position="20"/>
    </location>
    <ligand>
        <name>Zn(2+)</name>
        <dbReference type="ChEBI" id="CHEBI:29105"/>
        <label>1</label>
    </ligand>
</feature>
<feature type="binding site" evidence="2">
    <location>
        <position position="31"/>
    </location>
    <ligand>
        <name>Zn(2+)</name>
        <dbReference type="ChEBI" id="CHEBI:29105"/>
        <label>2</label>
    </ligand>
</feature>
<feature type="binding site" evidence="2">
    <location>
        <position position="32"/>
    </location>
    <ligand>
        <name>Zn(2+)</name>
        <dbReference type="ChEBI" id="CHEBI:29105"/>
        <label>2</label>
    </ligand>
</feature>
<feature type="binding site" evidence="2">
    <location>
        <position position="38"/>
    </location>
    <ligand>
        <name>Zn(2+)</name>
        <dbReference type="ChEBI" id="CHEBI:29105"/>
        <label>1</label>
    </ligand>
</feature>
<feature type="binding site" evidence="2">
    <location>
        <position position="41"/>
    </location>
    <ligand>
        <name>Zn(2+)</name>
        <dbReference type="ChEBI" id="CHEBI:29105"/>
        <label>1</label>
    </ligand>
</feature>
<feature type="binding site" evidence="2">
    <location>
        <position position="42"/>
    </location>
    <ligand>
        <name>Zn(2+)</name>
        <dbReference type="ChEBI" id="CHEBI:29105"/>
        <label>2</label>
    </ligand>
</feature>
<feature type="binding site" evidence="2">
    <location>
        <position position="50"/>
    </location>
    <ligand>
        <name>Zn(2+)</name>
        <dbReference type="ChEBI" id="CHEBI:29105"/>
        <label>2</label>
    </ligand>
</feature>
<feature type="binding site" evidence="2">
    <location>
        <position position="62"/>
    </location>
    <ligand>
        <name>Zn(2+)</name>
        <dbReference type="ChEBI" id="CHEBI:29105"/>
        <label>3</label>
    </ligand>
</feature>
<feature type="binding site" evidence="2">
    <location>
        <position position="65"/>
    </location>
    <ligand>
        <name>Zn(2+)</name>
        <dbReference type="ChEBI" id="CHEBI:29105"/>
        <label>3</label>
    </ligand>
</feature>
<feature type="binding site" evidence="2">
    <location>
        <position position="75"/>
    </location>
    <ligand>
        <name>Zn(2+)</name>
        <dbReference type="ChEBI" id="CHEBI:29105"/>
        <label>3</label>
    </ligand>
</feature>
<feature type="binding site" evidence="2">
    <location>
        <position position="78"/>
    </location>
    <ligand>
        <name>Zn(2+)</name>
        <dbReference type="ChEBI" id="CHEBI:29105"/>
        <label>3</label>
    </ligand>
</feature>
<feature type="binding site" evidence="3">
    <location>
        <position position="87"/>
    </location>
    <ligand>
        <name>Zn(2+)</name>
        <dbReference type="ChEBI" id="CHEBI:29105"/>
        <label>4</label>
    </ligand>
</feature>
<feature type="binding site" evidence="3">
    <location>
        <position position="90"/>
    </location>
    <ligand>
        <name>Zn(2+)</name>
        <dbReference type="ChEBI" id="CHEBI:29105"/>
        <label>4</label>
    </ligand>
</feature>
<feature type="binding site" evidence="3">
    <location>
        <position position="103"/>
    </location>
    <ligand>
        <name>Zn(2+)</name>
        <dbReference type="ChEBI" id="CHEBI:29105"/>
        <label>4</label>
    </ligand>
</feature>
<feature type="binding site" evidence="3">
    <location>
        <position position="104"/>
    </location>
    <ligand>
        <name>Zn(2+)</name>
        <dbReference type="ChEBI" id="CHEBI:29105"/>
        <label>5</label>
    </ligand>
</feature>
<feature type="binding site" evidence="3">
    <location>
        <position position="107"/>
    </location>
    <ligand>
        <name>Zn(2+)</name>
        <dbReference type="ChEBI" id="CHEBI:29105"/>
        <label>5</label>
    </ligand>
</feature>
<feature type="binding site" evidence="3">
    <location>
        <position position="110"/>
    </location>
    <ligand>
        <name>Zn(2+)</name>
        <dbReference type="ChEBI" id="CHEBI:29105"/>
        <label>4</label>
    </ligand>
</feature>
<feature type="binding site" evidence="3">
    <location>
        <position position="120"/>
    </location>
    <ligand>
        <name>Zn(2+)</name>
        <dbReference type="ChEBI" id="CHEBI:29105"/>
        <label>5</label>
    </ligand>
</feature>
<feature type="binding site" evidence="3">
    <location>
        <position position="121"/>
    </location>
    <ligand>
        <name>Zn(2+)</name>
        <dbReference type="ChEBI" id="CHEBI:29105"/>
        <label>6</label>
    </ligand>
</feature>
<feature type="binding site" evidence="3">
    <location>
        <position position="124"/>
    </location>
    <ligand>
        <name>Zn(2+)</name>
        <dbReference type="ChEBI" id="CHEBI:29105"/>
        <label>6</label>
    </ligand>
</feature>
<feature type="binding site" evidence="3">
    <location>
        <position position="127"/>
    </location>
    <ligand>
        <name>Zn(2+)</name>
        <dbReference type="ChEBI" id="CHEBI:29105"/>
        <label>5</label>
    </ligand>
</feature>
<feature type="binding site" evidence="3">
    <location>
        <position position="136"/>
    </location>
    <ligand>
        <name>Zn(2+)</name>
        <dbReference type="ChEBI" id="CHEBI:29105"/>
        <label>6</label>
    </ligand>
</feature>
<feature type="binding site" evidence="3">
    <location>
        <position position="138"/>
    </location>
    <ligand>
        <name>Zn(2+)</name>
        <dbReference type="ChEBI" id="CHEBI:29105"/>
        <label>6</label>
    </ligand>
</feature>
<feature type="mutagenesis site" description="Abolishes E3 ubiquitin-protein ligase activity." evidence="4">
    <original>H</original>
    <variation>Y</variation>
    <location>
        <position position="168"/>
    </location>
</feature>
<reference key="1">
    <citation type="journal article" date="2005" name="Genome Res.">
        <title>Sequence, annotation, and analysis of synteny between rice chromosome 3 and diverged grass species.</title>
        <authorList>
            <consortium name="The rice chromosome 3 sequencing consortium"/>
            <person name="Buell C.R."/>
            <person name="Yuan Q."/>
            <person name="Ouyang S."/>
            <person name="Liu J."/>
            <person name="Zhu W."/>
            <person name="Wang A."/>
            <person name="Maiti R."/>
            <person name="Haas B."/>
            <person name="Wortman J."/>
            <person name="Pertea M."/>
            <person name="Jones K.M."/>
            <person name="Kim M."/>
            <person name="Overton L."/>
            <person name="Tsitrin T."/>
            <person name="Fadrosh D."/>
            <person name="Bera J."/>
            <person name="Weaver B."/>
            <person name="Jin S."/>
            <person name="Johri S."/>
            <person name="Reardon M."/>
            <person name="Webb K."/>
            <person name="Hill J."/>
            <person name="Moffat K."/>
            <person name="Tallon L."/>
            <person name="Van Aken S."/>
            <person name="Lewis M."/>
            <person name="Utterback T."/>
            <person name="Feldblyum T."/>
            <person name="Zismann V."/>
            <person name="Iobst S."/>
            <person name="Hsiao J."/>
            <person name="de Vazeille A.R."/>
            <person name="Salzberg S.L."/>
            <person name="White O."/>
            <person name="Fraser C.M."/>
            <person name="Yu Y."/>
            <person name="Kim H."/>
            <person name="Rambo T."/>
            <person name="Currie J."/>
            <person name="Collura K."/>
            <person name="Kernodle-Thompson S."/>
            <person name="Wei F."/>
            <person name="Kudrna K."/>
            <person name="Ammiraju J.S.S."/>
            <person name="Luo M."/>
            <person name="Goicoechea J.L."/>
            <person name="Wing R.A."/>
            <person name="Henry D."/>
            <person name="Oates R."/>
            <person name="Palmer M."/>
            <person name="Pries G."/>
            <person name="Saski C."/>
            <person name="Simmons J."/>
            <person name="Soderlund C."/>
            <person name="Nelson W."/>
            <person name="de la Bastide M."/>
            <person name="Spiegel L."/>
            <person name="Nascimento L."/>
            <person name="Huang E."/>
            <person name="Preston R."/>
            <person name="Zutavern T."/>
            <person name="Palmer L."/>
            <person name="O'Shaughnessy A."/>
            <person name="Dike S."/>
            <person name="McCombie W.R."/>
            <person name="Minx P."/>
            <person name="Cordum H."/>
            <person name="Wilson R."/>
            <person name="Jin W."/>
            <person name="Lee H.R."/>
            <person name="Jiang J."/>
            <person name="Jackson S."/>
        </authorList>
    </citation>
    <scope>NUCLEOTIDE SEQUENCE [LARGE SCALE GENOMIC DNA]</scope>
    <source>
        <strain>cv. Nipponbare</strain>
    </source>
</reference>
<reference key="2">
    <citation type="journal article" date="2005" name="Nature">
        <title>The map-based sequence of the rice genome.</title>
        <authorList>
            <consortium name="International rice genome sequencing project (IRGSP)"/>
        </authorList>
    </citation>
    <scope>NUCLEOTIDE SEQUENCE [LARGE SCALE GENOMIC DNA]</scope>
    <source>
        <strain>cv. Nipponbare</strain>
    </source>
</reference>
<reference key="3">
    <citation type="journal article" date="2008" name="Nucleic Acids Res.">
        <title>The rice annotation project database (RAP-DB): 2008 update.</title>
        <authorList>
            <consortium name="The rice annotation project (RAP)"/>
        </authorList>
    </citation>
    <scope>GENOME REANNOTATION</scope>
    <source>
        <strain>cv. Nipponbare</strain>
    </source>
</reference>
<reference key="4">
    <citation type="journal article" date="2013" name="Rice">
        <title>Improvement of the Oryza sativa Nipponbare reference genome using next generation sequence and optical map data.</title>
        <authorList>
            <person name="Kawahara Y."/>
            <person name="de la Bastide M."/>
            <person name="Hamilton J.P."/>
            <person name="Kanamori H."/>
            <person name="McCombie W.R."/>
            <person name="Ouyang S."/>
            <person name="Schwartz D.C."/>
            <person name="Tanaka T."/>
            <person name="Wu J."/>
            <person name="Zhou S."/>
            <person name="Childs K.L."/>
            <person name="Davidson R.M."/>
            <person name="Lin H."/>
            <person name="Quesada-Ocampo L."/>
            <person name="Vaillancourt B."/>
            <person name="Sakai H."/>
            <person name="Lee S.S."/>
            <person name="Kim J."/>
            <person name="Numa H."/>
            <person name="Itoh T."/>
            <person name="Buell C.R."/>
            <person name="Matsumoto T."/>
        </authorList>
    </citation>
    <scope>GENOME REANNOTATION</scope>
    <source>
        <strain>cv. Nipponbare</strain>
    </source>
</reference>
<reference key="5">
    <citation type="journal article" date="2005" name="PLoS Biol.">
        <title>The genomes of Oryza sativa: a history of duplications.</title>
        <authorList>
            <person name="Yu J."/>
            <person name="Wang J."/>
            <person name="Lin W."/>
            <person name="Li S."/>
            <person name="Li H."/>
            <person name="Zhou J."/>
            <person name="Ni P."/>
            <person name="Dong W."/>
            <person name="Hu S."/>
            <person name="Zeng C."/>
            <person name="Zhang J."/>
            <person name="Zhang Y."/>
            <person name="Li R."/>
            <person name="Xu Z."/>
            <person name="Li S."/>
            <person name="Li X."/>
            <person name="Zheng H."/>
            <person name="Cong L."/>
            <person name="Lin L."/>
            <person name="Yin J."/>
            <person name="Geng J."/>
            <person name="Li G."/>
            <person name="Shi J."/>
            <person name="Liu J."/>
            <person name="Lv H."/>
            <person name="Li J."/>
            <person name="Wang J."/>
            <person name="Deng Y."/>
            <person name="Ran L."/>
            <person name="Shi X."/>
            <person name="Wang X."/>
            <person name="Wu Q."/>
            <person name="Li C."/>
            <person name="Ren X."/>
            <person name="Wang J."/>
            <person name="Wang X."/>
            <person name="Li D."/>
            <person name="Liu D."/>
            <person name="Zhang X."/>
            <person name="Ji Z."/>
            <person name="Zhao W."/>
            <person name="Sun Y."/>
            <person name="Zhang Z."/>
            <person name="Bao J."/>
            <person name="Han Y."/>
            <person name="Dong L."/>
            <person name="Ji J."/>
            <person name="Chen P."/>
            <person name="Wu S."/>
            <person name="Liu J."/>
            <person name="Xiao Y."/>
            <person name="Bu D."/>
            <person name="Tan J."/>
            <person name="Yang L."/>
            <person name="Ye C."/>
            <person name="Zhang J."/>
            <person name="Xu J."/>
            <person name="Zhou Y."/>
            <person name="Yu Y."/>
            <person name="Zhang B."/>
            <person name="Zhuang S."/>
            <person name="Wei H."/>
            <person name="Liu B."/>
            <person name="Lei M."/>
            <person name="Yu H."/>
            <person name="Li Y."/>
            <person name="Xu H."/>
            <person name="Wei S."/>
            <person name="He X."/>
            <person name="Fang L."/>
            <person name="Zhang Z."/>
            <person name="Zhang Y."/>
            <person name="Huang X."/>
            <person name="Su Z."/>
            <person name="Tong W."/>
            <person name="Li J."/>
            <person name="Tong Z."/>
            <person name="Li S."/>
            <person name="Ye J."/>
            <person name="Wang L."/>
            <person name="Fang L."/>
            <person name="Lei T."/>
            <person name="Chen C.-S."/>
            <person name="Chen H.-C."/>
            <person name="Xu Z."/>
            <person name="Li H."/>
            <person name="Huang H."/>
            <person name="Zhang F."/>
            <person name="Xu H."/>
            <person name="Li N."/>
            <person name="Zhao C."/>
            <person name="Li S."/>
            <person name="Dong L."/>
            <person name="Huang Y."/>
            <person name="Li L."/>
            <person name="Xi Y."/>
            <person name="Qi Q."/>
            <person name="Li W."/>
            <person name="Zhang B."/>
            <person name="Hu W."/>
            <person name="Zhang Y."/>
            <person name="Tian X."/>
            <person name="Jiao Y."/>
            <person name="Liang X."/>
            <person name="Jin J."/>
            <person name="Gao L."/>
            <person name="Zheng W."/>
            <person name="Hao B."/>
            <person name="Liu S.-M."/>
            <person name="Wang W."/>
            <person name="Yuan L."/>
            <person name="Cao M."/>
            <person name="McDermott J."/>
            <person name="Samudrala R."/>
            <person name="Wang J."/>
            <person name="Wong G.K.-S."/>
            <person name="Yang H."/>
        </authorList>
    </citation>
    <scope>NUCLEOTIDE SEQUENCE [LARGE SCALE GENOMIC DNA]</scope>
    <source>
        <strain>cv. Nipponbare</strain>
    </source>
</reference>
<reference key="6">
    <citation type="journal article" date="2003" name="Science">
        <title>Collection, mapping, and annotation of over 28,000 cDNA clones from japonica rice.</title>
        <authorList>
            <consortium name="The rice full-length cDNA consortium"/>
        </authorList>
    </citation>
    <scope>NUCLEOTIDE SEQUENCE [LARGE SCALE MRNA]</scope>
    <source>
        <strain>cv. Nipponbare</strain>
    </source>
</reference>
<reference key="7">
    <citation type="journal article" date="2015" name="Plant Mol. Biol.">
        <title>Knock-down of stress inducible OsSRFP1 encoding an E3 ubiquitin ligase with transcriptional activation activity confers abiotic stress tolerance through enhancing antioxidant protection in rice.</title>
        <authorList>
            <person name="Fang H."/>
            <person name="Meng Q."/>
            <person name="Xu J."/>
            <person name="Tang H."/>
            <person name="Tang S."/>
            <person name="Zhang H."/>
            <person name="Huang J."/>
        </authorList>
    </citation>
    <scope>FUNCTION</scope>
    <scope>CATALYTIC ACTIVITY</scope>
    <scope>SUBCELLULAR LOCATION</scope>
    <scope>TISSUE SPECIFICITY</scope>
    <scope>INDUCTION</scope>
    <scope>MUTAGENESIS OF HIS-168</scope>
</reference>
<dbReference type="EC" id="2.3.2.27" evidence="4"/>
<dbReference type="EMBL" id="DP000009">
    <property type="protein sequence ID" value="ABF95919.1"/>
    <property type="molecule type" value="Genomic_DNA"/>
</dbReference>
<dbReference type="EMBL" id="AP008209">
    <property type="protein sequence ID" value="BAF12019.1"/>
    <property type="molecule type" value="Genomic_DNA"/>
</dbReference>
<dbReference type="EMBL" id="AP014959">
    <property type="protein sequence ID" value="BAS84183.1"/>
    <property type="molecule type" value="Genomic_DNA"/>
</dbReference>
<dbReference type="EMBL" id="CM000140">
    <property type="protein sequence ID" value="EEE59054.1"/>
    <property type="molecule type" value="Genomic_DNA"/>
</dbReference>
<dbReference type="EMBL" id="AK059950">
    <property type="protein sequence ID" value="BAG87232.1"/>
    <property type="molecule type" value="mRNA"/>
</dbReference>
<dbReference type="SMR" id="Q10LI1"/>
<dbReference type="FunCoup" id="Q10LI1">
    <property type="interactions" value="1530"/>
</dbReference>
<dbReference type="STRING" id="39947.Q10LI1"/>
<dbReference type="PaxDb" id="39947-Q10LI1"/>
<dbReference type="EnsemblPlants" id="Os03t0348900-02">
    <property type="protein sequence ID" value="Os03t0348900-02"/>
    <property type="gene ID" value="Os03g0348900"/>
</dbReference>
<dbReference type="Gramene" id="Os03t0348900-02">
    <property type="protein sequence ID" value="Os03t0348900-02"/>
    <property type="gene ID" value="Os03g0348900"/>
</dbReference>
<dbReference type="KEGG" id="dosa:Os03g0348900"/>
<dbReference type="KEGG" id="osa:4332833"/>
<dbReference type="eggNOG" id="KOG1940">
    <property type="taxonomic scope" value="Eukaryota"/>
</dbReference>
<dbReference type="HOGENOM" id="CLU_013368_1_2_1"/>
<dbReference type="InParanoid" id="Q10LI1"/>
<dbReference type="OMA" id="VWRRMDE"/>
<dbReference type="OrthoDB" id="411372at2759"/>
<dbReference type="UniPathway" id="UPA00143"/>
<dbReference type="Proteomes" id="UP000000763">
    <property type="component" value="Chromosome 3"/>
</dbReference>
<dbReference type="Proteomes" id="UP000007752">
    <property type="component" value="Chromosome 3"/>
</dbReference>
<dbReference type="Proteomes" id="UP000059680">
    <property type="component" value="Chromosome 3"/>
</dbReference>
<dbReference type="ExpressionAtlas" id="Q10LI1">
    <property type="expression patterns" value="baseline and differential"/>
</dbReference>
<dbReference type="GO" id="GO:0005737">
    <property type="term" value="C:cytoplasm"/>
    <property type="evidence" value="ECO:0007669"/>
    <property type="project" value="UniProtKB-SubCell"/>
</dbReference>
<dbReference type="GO" id="GO:0005634">
    <property type="term" value="C:nucleus"/>
    <property type="evidence" value="ECO:0000318"/>
    <property type="project" value="GO_Central"/>
</dbReference>
<dbReference type="GO" id="GO:0061630">
    <property type="term" value="F:ubiquitin protein ligase activity"/>
    <property type="evidence" value="ECO:0000318"/>
    <property type="project" value="GO_Central"/>
</dbReference>
<dbReference type="GO" id="GO:0008270">
    <property type="term" value="F:zinc ion binding"/>
    <property type="evidence" value="ECO:0007669"/>
    <property type="project" value="UniProtKB-KW"/>
</dbReference>
<dbReference type="GO" id="GO:0016567">
    <property type="term" value="P:protein ubiquitination"/>
    <property type="evidence" value="ECO:0000318"/>
    <property type="project" value="GO_Central"/>
</dbReference>
<dbReference type="GO" id="GO:0006511">
    <property type="term" value="P:ubiquitin-dependent protein catabolic process"/>
    <property type="evidence" value="ECO:0000318"/>
    <property type="project" value="GO_Central"/>
</dbReference>
<dbReference type="Gene3D" id="2.20.28.10">
    <property type="match status" value="1"/>
</dbReference>
<dbReference type="Gene3D" id="3.30.40.10">
    <property type="entry name" value="Zinc/RING finger domain, C3HC4 (zinc finger)"/>
    <property type="match status" value="1"/>
</dbReference>
<dbReference type="InterPro" id="IPR039512">
    <property type="entry name" value="RCHY1_zinc-ribbon"/>
</dbReference>
<dbReference type="InterPro" id="IPR008913">
    <property type="entry name" value="Znf_CHY"/>
</dbReference>
<dbReference type="InterPro" id="IPR037274">
    <property type="entry name" value="Znf_CHY_sf"/>
</dbReference>
<dbReference type="InterPro" id="IPR017921">
    <property type="entry name" value="Znf_CTCHY"/>
</dbReference>
<dbReference type="InterPro" id="IPR037275">
    <property type="entry name" value="Znf_CTCHY_sf"/>
</dbReference>
<dbReference type="InterPro" id="IPR001841">
    <property type="entry name" value="Znf_RING"/>
</dbReference>
<dbReference type="InterPro" id="IPR013083">
    <property type="entry name" value="Znf_RING/FYVE/PHD"/>
</dbReference>
<dbReference type="PANTHER" id="PTHR21319:SF13">
    <property type="entry name" value="E3 UBIQUITIN-PROTEIN LIGASE SRFP1"/>
    <property type="match status" value="1"/>
</dbReference>
<dbReference type="PANTHER" id="PTHR21319">
    <property type="entry name" value="RING FINGER AND CHY ZINC FINGER DOMAIN-CONTAINING PROTEIN 1"/>
    <property type="match status" value="1"/>
</dbReference>
<dbReference type="Pfam" id="PF05495">
    <property type="entry name" value="zf-CHY"/>
    <property type="match status" value="1"/>
</dbReference>
<dbReference type="Pfam" id="PF13639">
    <property type="entry name" value="zf-RING_2"/>
    <property type="match status" value="1"/>
</dbReference>
<dbReference type="Pfam" id="PF14599">
    <property type="entry name" value="zinc_ribbon_6"/>
    <property type="match status" value="1"/>
</dbReference>
<dbReference type="SMART" id="SM00184">
    <property type="entry name" value="RING"/>
    <property type="match status" value="1"/>
</dbReference>
<dbReference type="SUPFAM" id="SSF161219">
    <property type="entry name" value="CHY zinc finger-like"/>
    <property type="match status" value="1"/>
</dbReference>
<dbReference type="SUPFAM" id="SSF57850">
    <property type="entry name" value="RING/U-box"/>
    <property type="match status" value="1"/>
</dbReference>
<dbReference type="SUPFAM" id="SSF161245">
    <property type="entry name" value="Zinc hairpin stack"/>
    <property type="match status" value="1"/>
</dbReference>
<dbReference type="PROSITE" id="PS51266">
    <property type="entry name" value="ZF_CHY"/>
    <property type="match status" value="1"/>
</dbReference>
<dbReference type="PROSITE" id="PS51270">
    <property type="entry name" value="ZF_CTCHY"/>
    <property type="match status" value="1"/>
</dbReference>
<dbReference type="PROSITE" id="PS50089">
    <property type="entry name" value="ZF_RING_2"/>
    <property type="match status" value="1"/>
</dbReference>
<proteinExistence type="evidence at protein level"/>
<keyword id="KW-0963">Cytoplasm</keyword>
<keyword id="KW-0479">Metal-binding</keyword>
<keyword id="KW-0539">Nucleus</keyword>
<keyword id="KW-1185">Reference proteome</keyword>
<keyword id="KW-0346">Stress response</keyword>
<keyword id="KW-0808">Transferase</keyword>
<keyword id="KW-0833">Ubl conjugation pathway</keyword>
<keyword id="KW-0862">Zinc</keyword>
<keyword id="KW-0863">Zinc-finger</keyword>
<sequence>MELDDASRHGFGRMGFGCKHYRRRCRIRAPCCNDVFHCRHCHNESTKDGHELDRHAVESVICLVCDTEQPVAQVCYNCGVCMGEYFCSACKFFDDDVDREHFHCQDCGICRVGGKDNFFHCEKCGSCYSVSLRDKHCCIENSMKNNCPICYEYLFDSLRETSVLRCGHTMHLQCFHEMLKHDKFSCPICSMPIFDMDKFLRALDAEIEANMLHIDYMGKGWIVCNDCRDTTQVYARVAGHKCCHCQSHNTCRVAAPVLPA</sequence>